<reference key="1">
    <citation type="journal article" date="2004" name="Nature">
        <title>Genome evolution in yeasts.</title>
        <authorList>
            <person name="Dujon B."/>
            <person name="Sherman D."/>
            <person name="Fischer G."/>
            <person name="Durrens P."/>
            <person name="Casaregola S."/>
            <person name="Lafontaine I."/>
            <person name="de Montigny J."/>
            <person name="Marck C."/>
            <person name="Neuveglise C."/>
            <person name="Talla E."/>
            <person name="Goffard N."/>
            <person name="Frangeul L."/>
            <person name="Aigle M."/>
            <person name="Anthouard V."/>
            <person name="Babour A."/>
            <person name="Barbe V."/>
            <person name="Barnay S."/>
            <person name="Blanchin S."/>
            <person name="Beckerich J.-M."/>
            <person name="Beyne E."/>
            <person name="Bleykasten C."/>
            <person name="Boisrame A."/>
            <person name="Boyer J."/>
            <person name="Cattolico L."/>
            <person name="Confanioleri F."/>
            <person name="de Daruvar A."/>
            <person name="Despons L."/>
            <person name="Fabre E."/>
            <person name="Fairhead C."/>
            <person name="Ferry-Dumazet H."/>
            <person name="Groppi A."/>
            <person name="Hantraye F."/>
            <person name="Hennequin C."/>
            <person name="Jauniaux N."/>
            <person name="Joyet P."/>
            <person name="Kachouri R."/>
            <person name="Kerrest A."/>
            <person name="Koszul R."/>
            <person name="Lemaire M."/>
            <person name="Lesur I."/>
            <person name="Ma L."/>
            <person name="Muller H."/>
            <person name="Nicaud J.-M."/>
            <person name="Nikolski M."/>
            <person name="Oztas S."/>
            <person name="Ozier-Kalogeropoulos O."/>
            <person name="Pellenz S."/>
            <person name="Potier S."/>
            <person name="Richard G.-F."/>
            <person name="Straub M.-L."/>
            <person name="Suleau A."/>
            <person name="Swennen D."/>
            <person name="Tekaia F."/>
            <person name="Wesolowski-Louvel M."/>
            <person name="Westhof E."/>
            <person name="Wirth B."/>
            <person name="Zeniou-Meyer M."/>
            <person name="Zivanovic Y."/>
            <person name="Bolotin-Fukuhara M."/>
            <person name="Thierry A."/>
            <person name="Bouchier C."/>
            <person name="Caudron B."/>
            <person name="Scarpelli C."/>
            <person name="Gaillardin C."/>
            <person name="Weissenbach J."/>
            <person name="Wincker P."/>
            <person name="Souciet J.-L."/>
        </authorList>
    </citation>
    <scope>NUCLEOTIDE SEQUENCE [LARGE SCALE GENOMIC DNA]</scope>
    <source>
        <strain>CLIB 122 / E 150</strain>
    </source>
</reference>
<organism>
    <name type="scientific">Yarrowia lipolytica (strain CLIB 122 / E 150)</name>
    <name type="common">Yeast</name>
    <name type="synonym">Candida lipolytica</name>
    <dbReference type="NCBI Taxonomy" id="284591"/>
    <lineage>
        <taxon>Eukaryota</taxon>
        <taxon>Fungi</taxon>
        <taxon>Dikarya</taxon>
        <taxon>Ascomycota</taxon>
        <taxon>Saccharomycotina</taxon>
        <taxon>Dipodascomycetes</taxon>
        <taxon>Dipodascales</taxon>
        <taxon>Dipodascales incertae sedis</taxon>
        <taxon>Yarrowia</taxon>
    </lineage>
</organism>
<proteinExistence type="inferred from homology"/>
<comment type="function">
    <text evidence="1">Assembly of polyisoprenoid side chains. The polyprenyl synthase of coenzyme Q biosynthesis catalyzes the formation from isopentenyl diphosphate of all trans-polyprenyl pyrophosphates generally ranging in length of between 6 and 10 isoprene units depending on the species (By similarity).</text>
</comment>
<comment type="cofactor">
    <cofactor evidence="1">
        <name>Mg(2+)</name>
        <dbReference type="ChEBI" id="CHEBI:18420"/>
    </cofactor>
    <text evidence="1">Binds 2 Mg(2+) ions per subunit.</text>
</comment>
<comment type="pathway">
    <text>Cofactor biosynthesis; ubiquinone biosynthesis.</text>
</comment>
<comment type="subcellular location">
    <subcellularLocation>
        <location evidence="1">Mitochondrion</location>
    </subcellularLocation>
</comment>
<comment type="similarity">
    <text evidence="5">Belongs to the FPP/GGPP synthase family.</text>
</comment>
<feature type="transit peptide" description="Mitochondrion" evidence="4">
    <location>
        <begin position="1"/>
        <end status="unknown"/>
    </location>
</feature>
<feature type="chain" id="PRO_0000016476" description="Probable hexaprenyl pyrophosphate synthase, mitochondrial">
    <location>
        <begin status="unknown"/>
        <end position="452"/>
    </location>
</feature>
<feature type="binding site" evidence="2">
    <location>
        <position position="108"/>
    </location>
    <ligand>
        <name>isopentenyl diphosphate</name>
        <dbReference type="ChEBI" id="CHEBI:128769"/>
    </ligand>
</feature>
<feature type="binding site" evidence="2">
    <location>
        <position position="111"/>
    </location>
    <ligand>
        <name>isopentenyl diphosphate</name>
        <dbReference type="ChEBI" id="CHEBI:128769"/>
    </ligand>
</feature>
<feature type="binding site" evidence="3">
    <location>
        <position position="204"/>
    </location>
    <ligand>
        <name>isopentenyl diphosphate</name>
        <dbReference type="ChEBI" id="CHEBI:128769"/>
    </ligand>
</feature>
<feature type="binding site" evidence="2">
    <location>
        <position position="211"/>
    </location>
    <ligand>
        <name>Mg(2+)</name>
        <dbReference type="ChEBI" id="CHEBI:18420"/>
        <label>1</label>
    </ligand>
</feature>
<feature type="binding site" evidence="2">
    <location>
        <position position="211"/>
    </location>
    <ligand>
        <name>Mg(2+)</name>
        <dbReference type="ChEBI" id="CHEBI:18420"/>
        <label>2</label>
    </ligand>
</feature>
<feature type="binding site" evidence="2">
    <location>
        <position position="215"/>
    </location>
    <ligand>
        <name>Mg(2+)</name>
        <dbReference type="ChEBI" id="CHEBI:18420"/>
        <label>1</label>
    </ligand>
</feature>
<feature type="binding site" evidence="2">
    <location>
        <position position="215"/>
    </location>
    <ligand>
        <name>Mg(2+)</name>
        <dbReference type="ChEBI" id="CHEBI:18420"/>
        <label>2</label>
    </ligand>
</feature>
<feature type="binding site" evidence="1">
    <location>
        <position position="220"/>
    </location>
    <ligand>
        <name>an all-trans-polyprenyl diphosphate</name>
        <dbReference type="ChEBI" id="CHEBI:58914"/>
    </ligand>
</feature>
<feature type="binding site" evidence="2">
    <location>
        <position position="221"/>
    </location>
    <ligand>
        <name>isopentenyl diphosphate</name>
        <dbReference type="ChEBI" id="CHEBI:128769"/>
    </ligand>
</feature>
<feature type="binding site" evidence="1">
    <location>
        <position position="303"/>
    </location>
    <ligand>
        <name>an all-trans-polyprenyl diphosphate</name>
        <dbReference type="ChEBI" id="CHEBI:58914"/>
    </ligand>
</feature>
<feature type="binding site" evidence="1">
    <location>
        <position position="304"/>
    </location>
    <ligand>
        <name>an all-trans-polyprenyl diphosphate</name>
        <dbReference type="ChEBI" id="CHEBI:58914"/>
    </ligand>
</feature>
<feature type="binding site" evidence="1">
    <location>
        <position position="341"/>
    </location>
    <ligand>
        <name>an all-trans-polyprenyl diphosphate</name>
        <dbReference type="ChEBI" id="CHEBI:58914"/>
    </ligand>
</feature>
<feature type="binding site" evidence="1">
    <location>
        <position position="358"/>
    </location>
    <ligand>
        <name>an all-trans-polyprenyl diphosphate</name>
        <dbReference type="ChEBI" id="CHEBI:58914"/>
    </ligand>
</feature>
<sequence>MLRVGRIGTKTLASSSLRFVAGARPKSTLTEAVLETTGLLKTTPQNPEWSGAVKQASRLVETDTPIRDPFSIVSQEMSTLANNIGSLIGSGHPTLNKVATYYFQSEGKHVRPLIVLLLSRALSAIPESERDRGTFDASDVTENVGELNPEPSINDPLSPIEILHGINPDIVLNPLSRPSDPLPYESNGILPKQRRLAEIVEMIHTASLLHDDVIDNSATRRGSPTGNVAFGNKMAILAGDFLLGRASVAIARLRNAEVIELLSTTIANLVEGEFMQLKNTIVDNSEIANKATFEYYIHKTYLKTASLMSKSCRAAAVLSGARNPIVDASYKFGKNLGLCFQVVDDMLDYSEGESHLGKPAGADLKLGLATAPVLFAWEKYPELGDMIKRKFDGPGDVERARFLVQQADGLSRTRELAQKYCDEAVANLDLLPYSESREALRNLTMKMMNRSK</sequence>
<gene>
    <name type="primary">COQ1</name>
    <name type="ordered locus">YALI0C18755g</name>
</gene>
<accession>Q6CBH3</accession>
<evidence type="ECO:0000250" key="1"/>
<evidence type="ECO:0000250" key="2">
    <source>
        <dbReference type="UniProtKB" id="P14324"/>
    </source>
</evidence>
<evidence type="ECO:0000250" key="3">
    <source>
        <dbReference type="UniProtKB" id="Q12051"/>
    </source>
</evidence>
<evidence type="ECO:0000255" key="4"/>
<evidence type="ECO:0000305" key="5"/>
<keyword id="KW-0414">Isoprene biosynthesis</keyword>
<keyword id="KW-0460">Magnesium</keyword>
<keyword id="KW-0479">Metal-binding</keyword>
<keyword id="KW-0496">Mitochondrion</keyword>
<keyword id="KW-1185">Reference proteome</keyword>
<keyword id="KW-0808">Transferase</keyword>
<keyword id="KW-0809">Transit peptide</keyword>
<name>COQ1_YARLI</name>
<protein>
    <recommendedName>
        <fullName>Probable hexaprenyl pyrophosphate synthase, mitochondrial</fullName>
        <shortName>HPS</shortName>
        <ecNumber>2.5.1.-</ecNumber>
    </recommendedName>
</protein>
<dbReference type="EC" id="2.5.1.-"/>
<dbReference type="EMBL" id="CR382129">
    <property type="protein sequence ID" value="CAG82309.1"/>
    <property type="molecule type" value="Genomic_DNA"/>
</dbReference>
<dbReference type="RefSeq" id="XP_501989.1">
    <property type="nucleotide sequence ID" value="XM_501989.1"/>
</dbReference>
<dbReference type="SMR" id="Q6CBH3"/>
<dbReference type="FunCoup" id="Q6CBH3">
    <property type="interactions" value="568"/>
</dbReference>
<dbReference type="STRING" id="284591.Q6CBH3"/>
<dbReference type="EnsemblFungi" id="CAG82309">
    <property type="protein sequence ID" value="CAG82309"/>
    <property type="gene ID" value="YALI0_C18755g"/>
</dbReference>
<dbReference type="KEGG" id="yli:2909963"/>
<dbReference type="VEuPathDB" id="FungiDB:YALI0_C18755g"/>
<dbReference type="HOGENOM" id="CLU_014015_1_0_1"/>
<dbReference type="InParanoid" id="Q6CBH3"/>
<dbReference type="OMA" id="AFDYYLH"/>
<dbReference type="OrthoDB" id="120267at4891"/>
<dbReference type="UniPathway" id="UPA00232"/>
<dbReference type="Proteomes" id="UP000001300">
    <property type="component" value="Chromosome C"/>
</dbReference>
<dbReference type="GO" id="GO:0031314">
    <property type="term" value="C:extrinsic component of mitochondrial inner membrane"/>
    <property type="evidence" value="ECO:0007669"/>
    <property type="project" value="EnsemblFungi"/>
</dbReference>
<dbReference type="GO" id="GO:0005739">
    <property type="term" value="C:mitochondrion"/>
    <property type="evidence" value="ECO:0000318"/>
    <property type="project" value="GO_Central"/>
</dbReference>
<dbReference type="GO" id="GO:0032476">
    <property type="term" value="C:polyprenyl diphosphate synthase complex"/>
    <property type="evidence" value="ECO:0000318"/>
    <property type="project" value="GO_Central"/>
</dbReference>
<dbReference type="GO" id="GO:0000010">
    <property type="term" value="F:heptaprenyl diphosphate synthase activity"/>
    <property type="evidence" value="ECO:0007669"/>
    <property type="project" value="EnsemblFungi"/>
</dbReference>
<dbReference type="GO" id="GO:0046872">
    <property type="term" value="F:metal ion binding"/>
    <property type="evidence" value="ECO:0007669"/>
    <property type="project" value="UniProtKB-KW"/>
</dbReference>
<dbReference type="GO" id="GO:0004659">
    <property type="term" value="F:prenyltransferase activity"/>
    <property type="evidence" value="ECO:0000318"/>
    <property type="project" value="GO_Central"/>
</dbReference>
<dbReference type="GO" id="GO:0008299">
    <property type="term" value="P:isoprenoid biosynthetic process"/>
    <property type="evidence" value="ECO:0000318"/>
    <property type="project" value="GO_Central"/>
</dbReference>
<dbReference type="GO" id="GO:0006744">
    <property type="term" value="P:ubiquinone biosynthetic process"/>
    <property type="evidence" value="ECO:0000318"/>
    <property type="project" value="GO_Central"/>
</dbReference>
<dbReference type="CDD" id="cd00685">
    <property type="entry name" value="Trans_IPPS_HT"/>
    <property type="match status" value="1"/>
</dbReference>
<dbReference type="Gene3D" id="1.10.600.10">
    <property type="entry name" value="Farnesyl Diphosphate Synthase"/>
    <property type="match status" value="1"/>
</dbReference>
<dbReference type="InterPro" id="IPR008949">
    <property type="entry name" value="Isoprenoid_synthase_dom_sf"/>
</dbReference>
<dbReference type="InterPro" id="IPR000092">
    <property type="entry name" value="Polyprenyl_synt"/>
</dbReference>
<dbReference type="InterPro" id="IPR033749">
    <property type="entry name" value="Polyprenyl_synt_CS"/>
</dbReference>
<dbReference type="PANTHER" id="PTHR12001:SF69">
    <property type="entry name" value="ALL TRANS-POLYPRENYL-DIPHOSPHATE SYNTHASE PDSS1"/>
    <property type="match status" value="1"/>
</dbReference>
<dbReference type="PANTHER" id="PTHR12001">
    <property type="entry name" value="GERANYLGERANYL PYROPHOSPHATE SYNTHASE"/>
    <property type="match status" value="1"/>
</dbReference>
<dbReference type="Pfam" id="PF00348">
    <property type="entry name" value="polyprenyl_synt"/>
    <property type="match status" value="1"/>
</dbReference>
<dbReference type="SFLD" id="SFLDS00005">
    <property type="entry name" value="Isoprenoid_Synthase_Type_I"/>
    <property type="match status" value="1"/>
</dbReference>
<dbReference type="SUPFAM" id="SSF48576">
    <property type="entry name" value="Terpenoid synthases"/>
    <property type="match status" value="1"/>
</dbReference>
<dbReference type="PROSITE" id="PS00723">
    <property type="entry name" value="POLYPRENYL_SYNTHASE_1"/>
    <property type="match status" value="1"/>
</dbReference>
<dbReference type="PROSITE" id="PS00444">
    <property type="entry name" value="POLYPRENYL_SYNTHASE_2"/>
    <property type="match status" value="1"/>
</dbReference>